<evidence type="ECO:0000255" key="1">
    <source>
        <dbReference type="HAMAP-Rule" id="MF_00484"/>
    </source>
</evidence>
<organism>
    <name type="scientific">Actinobacillus succinogenes (strain ATCC 55618 / DSM 22257 / CCUG 43843 / 130Z)</name>
    <dbReference type="NCBI Taxonomy" id="339671"/>
    <lineage>
        <taxon>Bacteria</taxon>
        <taxon>Pseudomonadati</taxon>
        <taxon>Pseudomonadota</taxon>
        <taxon>Gammaproteobacteria</taxon>
        <taxon>Pasteurellales</taxon>
        <taxon>Pasteurellaceae</taxon>
        <taxon>Actinobacillus</taxon>
    </lineage>
</organism>
<feature type="chain" id="PRO_1000072413" description="Glycogen synthase">
    <location>
        <begin position="1"/>
        <end position="476"/>
    </location>
</feature>
<feature type="binding site" evidence="1">
    <location>
        <position position="15"/>
    </location>
    <ligand>
        <name>ADP-alpha-D-glucose</name>
        <dbReference type="ChEBI" id="CHEBI:57498"/>
    </ligand>
</feature>
<gene>
    <name evidence="1" type="primary">glgA</name>
    <name type="ordered locus">Asuc_1355</name>
</gene>
<reference key="1">
    <citation type="journal article" date="2010" name="BMC Genomics">
        <title>A genomic perspective on the potential of Actinobacillus succinogenes for industrial succinate production.</title>
        <authorList>
            <person name="McKinlay J.B."/>
            <person name="Laivenieks M."/>
            <person name="Schindler B.D."/>
            <person name="McKinlay A.A."/>
            <person name="Siddaramappa S."/>
            <person name="Challacombe J.F."/>
            <person name="Lowry S.R."/>
            <person name="Clum A."/>
            <person name="Lapidus A.L."/>
            <person name="Burkhart K.B."/>
            <person name="Harkins V."/>
            <person name="Vieille C."/>
        </authorList>
    </citation>
    <scope>NUCLEOTIDE SEQUENCE [LARGE SCALE GENOMIC DNA]</scope>
    <source>
        <strain>ATCC 55618 / DSM 22257 / CCUG 43843 / 130Z</strain>
    </source>
</reference>
<protein>
    <recommendedName>
        <fullName evidence="1">Glycogen synthase</fullName>
        <ecNumber evidence="1">2.4.1.21</ecNumber>
    </recommendedName>
    <alternativeName>
        <fullName evidence="1">Starch [bacterial glycogen] synthase</fullName>
    </alternativeName>
</protein>
<name>GLGA_ACTSZ</name>
<comment type="function">
    <text evidence="1">Synthesizes alpha-1,4-glucan chains using ADP-glucose.</text>
</comment>
<comment type="catalytic activity">
    <reaction evidence="1">
        <text>[(1-&gt;4)-alpha-D-glucosyl](n) + ADP-alpha-D-glucose = [(1-&gt;4)-alpha-D-glucosyl](n+1) + ADP + H(+)</text>
        <dbReference type="Rhea" id="RHEA:18189"/>
        <dbReference type="Rhea" id="RHEA-COMP:9584"/>
        <dbReference type="Rhea" id="RHEA-COMP:9587"/>
        <dbReference type="ChEBI" id="CHEBI:15378"/>
        <dbReference type="ChEBI" id="CHEBI:15444"/>
        <dbReference type="ChEBI" id="CHEBI:57498"/>
        <dbReference type="ChEBI" id="CHEBI:456216"/>
        <dbReference type="EC" id="2.4.1.21"/>
    </reaction>
</comment>
<comment type="pathway">
    <text evidence="1">Glycan biosynthesis; glycogen biosynthesis.</text>
</comment>
<comment type="similarity">
    <text evidence="1">Belongs to the glycosyltransferase 1 family. Bacterial/plant glycogen synthase subfamily.</text>
</comment>
<keyword id="KW-0320">Glycogen biosynthesis</keyword>
<keyword id="KW-0328">Glycosyltransferase</keyword>
<keyword id="KW-1185">Reference proteome</keyword>
<keyword id="KW-0808">Transferase</keyword>
<dbReference type="EC" id="2.4.1.21" evidence="1"/>
<dbReference type="EMBL" id="CP000746">
    <property type="protein sequence ID" value="ABR74715.1"/>
    <property type="molecule type" value="Genomic_DNA"/>
</dbReference>
<dbReference type="RefSeq" id="WP_012073092.1">
    <property type="nucleotide sequence ID" value="NC_009655.1"/>
</dbReference>
<dbReference type="SMR" id="A6VP18"/>
<dbReference type="STRING" id="339671.Asuc_1355"/>
<dbReference type="CAZy" id="GT5">
    <property type="family name" value="Glycosyltransferase Family 5"/>
</dbReference>
<dbReference type="KEGG" id="asu:Asuc_1355"/>
<dbReference type="eggNOG" id="COG0297">
    <property type="taxonomic scope" value="Bacteria"/>
</dbReference>
<dbReference type="HOGENOM" id="CLU_009583_18_2_6"/>
<dbReference type="OrthoDB" id="9808590at2"/>
<dbReference type="UniPathway" id="UPA00164"/>
<dbReference type="Proteomes" id="UP000001114">
    <property type="component" value="Chromosome"/>
</dbReference>
<dbReference type="GO" id="GO:0005829">
    <property type="term" value="C:cytosol"/>
    <property type="evidence" value="ECO:0007669"/>
    <property type="project" value="TreeGrafter"/>
</dbReference>
<dbReference type="GO" id="GO:0009011">
    <property type="term" value="F:alpha-1,4-glucan glucosyltransferase (ADP-glucose donor) activity"/>
    <property type="evidence" value="ECO:0007669"/>
    <property type="project" value="UniProtKB-UniRule"/>
</dbReference>
<dbReference type="GO" id="GO:0004373">
    <property type="term" value="F:alpha-1,4-glucan glucosyltransferase (UDP-glucose donor) activity"/>
    <property type="evidence" value="ECO:0007669"/>
    <property type="project" value="InterPro"/>
</dbReference>
<dbReference type="GO" id="GO:0005978">
    <property type="term" value="P:glycogen biosynthetic process"/>
    <property type="evidence" value="ECO:0007669"/>
    <property type="project" value="UniProtKB-UniRule"/>
</dbReference>
<dbReference type="CDD" id="cd03791">
    <property type="entry name" value="GT5_Glycogen_synthase_DULL1-like"/>
    <property type="match status" value="1"/>
</dbReference>
<dbReference type="FunFam" id="3.40.50.2000:FF:000011">
    <property type="entry name" value="Glycogen synthase"/>
    <property type="match status" value="1"/>
</dbReference>
<dbReference type="Gene3D" id="3.40.50.2000">
    <property type="entry name" value="Glycogen Phosphorylase B"/>
    <property type="match status" value="2"/>
</dbReference>
<dbReference type="HAMAP" id="MF_00484">
    <property type="entry name" value="Glycogen_synth"/>
    <property type="match status" value="1"/>
</dbReference>
<dbReference type="InterPro" id="IPR001296">
    <property type="entry name" value="Glyco_trans_1"/>
</dbReference>
<dbReference type="InterPro" id="IPR011835">
    <property type="entry name" value="GS/SS"/>
</dbReference>
<dbReference type="InterPro" id="IPR013534">
    <property type="entry name" value="Starch_synth_cat_dom"/>
</dbReference>
<dbReference type="NCBIfam" id="TIGR02095">
    <property type="entry name" value="glgA"/>
    <property type="match status" value="1"/>
</dbReference>
<dbReference type="NCBIfam" id="NF001899">
    <property type="entry name" value="PRK00654.1-2"/>
    <property type="match status" value="1"/>
</dbReference>
<dbReference type="PANTHER" id="PTHR45825:SF11">
    <property type="entry name" value="ALPHA AMYLASE DOMAIN-CONTAINING PROTEIN"/>
    <property type="match status" value="1"/>
</dbReference>
<dbReference type="PANTHER" id="PTHR45825">
    <property type="entry name" value="GRANULE-BOUND STARCH SYNTHASE 1, CHLOROPLASTIC/AMYLOPLASTIC"/>
    <property type="match status" value="1"/>
</dbReference>
<dbReference type="Pfam" id="PF08323">
    <property type="entry name" value="Glyco_transf_5"/>
    <property type="match status" value="1"/>
</dbReference>
<dbReference type="Pfam" id="PF00534">
    <property type="entry name" value="Glycos_transf_1"/>
    <property type="match status" value="1"/>
</dbReference>
<dbReference type="SUPFAM" id="SSF53756">
    <property type="entry name" value="UDP-Glycosyltransferase/glycogen phosphorylase"/>
    <property type="match status" value="1"/>
</dbReference>
<sequence>MKVLHVCSEFYPLLKTGGLADVVGALPAAQKAIGDDARILIPAYPAIWRGIPDTVVVAEFDNFAGHVTLRYGIYNGVGVYLIDAPHLYAREGNPYHDQWYNDYADNYKRFGLLGWVASELALGLDFWWQAEVVHAHDWHAGLASAYLAAKGHPAKSVFTIHNLAYQGKFAARHLIELGLPVDMFNVNGLELYGEISYLKAGLFYSDMVTTVSPTYAKEITTTEFGYGLQGLLSTLDQQNRLAGVLNGVDDSIWHPNNDPYIHHHYKLKSMSGKAKNKALLQERFNLPQNPNVPVFVMITRLTEQKGVDLLLQCADEIVNQGGQLMILGSGAPHLQDWVNWLASQHPDNVGVWIGYDEPLSHLMVAGGDVILVPSRFEPCGLTQLYGLKYGTLPLVRKTGGLADTVVDSSAENIKARRATGFVFNNAEPEALRHCIQRVFSLWSKQRTWFTVRTVAMEQDFGWRVAAHRYHELYNKI</sequence>
<proteinExistence type="inferred from homology"/>
<accession>A6VP18</accession>